<comment type="function">
    <text evidence="1">Catalyzes the phosphorylation of autoinducer-2 (AI-2) to phospho-AI-2, which subsequently inactivates the transcriptional regulator LsrR and leads to the transcription of the lsr operon. Phosphorylates the ring-open form of (S)-4,5-dihydroxypentane-2,3-dione (DPD), which is the precursor to all AI-2 signaling molecules, at the C5 position.</text>
</comment>
<comment type="catalytic activity">
    <reaction evidence="1">
        <text>(S)-4,5-dihydroxypentane-2,3-dione + ATP = (2S)-2-hydroxy-3,4-dioxopentyl phosphate + ADP + H(+)</text>
        <dbReference type="Rhea" id="RHEA:15377"/>
        <dbReference type="ChEBI" id="CHEBI:15378"/>
        <dbReference type="ChEBI" id="CHEBI:29484"/>
        <dbReference type="ChEBI" id="CHEBI:30616"/>
        <dbReference type="ChEBI" id="CHEBI:71677"/>
        <dbReference type="ChEBI" id="CHEBI:456216"/>
        <dbReference type="EC" id="2.7.1.189"/>
    </reaction>
</comment>
<comment type="subcellular location">
    <subcellularLocation>
        <location evidence="1">Cytoplasm</location>
    </subcellularLocation>
</comment>
<comment type="similarity">
    <text evidence="1">Belongs to the FGGY kinase family.</text>
</comment>
<name>LSRK_YERPN</name>
<organism>
    <name type="scientific">Yersinia pestis bv. Antiqua (strain Nepal516)</name>
    <dbReference type="NCBI Taxonomy" id="377628"/>
    <lineage>
        <taxon>Bacteria</taxon>
        <taxon>Pseudomonadati</taxon>
        <taxon>Pseudomonadota</taxon>
        <taxon>Gammaproteobacteria</taxon>
        <taxon>Enterobacterales</taxon>
        <taxon>Yersiniaceae</taxon>
        <taxon>Yersinia</taxon>
    </lineage>
</organism>
<proteinExistence type="inferred from homology"/>
<sequence length="530" mass="57041">MSQLDTTTPSGDYLMALDAGTGSVRAVIFDLNGNQIAAGQAEWLHLPVPDVPGSMEFDLTTNWQLTCQCIRQALHLAKLPASAIRAVAACSMREGIVLYDRSGTPIWACANVDARASREVSELKELHNNGFELEVYQCSGQTLALSAMPRLLWLAHYRPDIYRQAGTLTMISDWLANMLSGELAVDPSNAGTTGMLDLVTRNWQPNLLEMAGLRADILSPVKETGTLLGHVTAKAAQECGLLAGTPVVMGGGDVQLGCLGLGVVHAGQTAVLGGTFWQQVVNLPQPIIDPNMNTRINPHVIPGMVQAESISFFTGLTMRWFRDAFCAEEKLLAQRLGIDTYSLLEDMAARVPAGAYGVMPIFSDVMRFKSWYHAAPSFINLSLDPEKCNKATLFRALEENAAIVSACNLAQIAEFSGVKASSVVFAGGGAKGKLWSQILADVTGVPVKVPVVKEATALGCAIAAGVGVGLYEALDKTGERLVRWEREYIPNTEHKALYQAAKTNWQAVYTDQLGLVDCGLTTSLWKAPCL</sequence>
<dbReference type="EC" id="2.7.1.189" evidence="1"/>
<dbReference type="EMBL" id="CP000305">
    <property type="protein sequence ID" value="ABG16619.1"/>
    <property type="molecule type" value="Genomic_DNA"/>
</dbReference>
<dbReference type="EMBL" id="ACNQ01000006">
    <property type="protein sequence ID" value="EEO78066.1"/>
    <property type="molecule type" value="Genomic_DNA"/>
</dbReference>
<dbReference type="PIR" id="AF0051">
    <property type="entry name" value="AF0051"/>
</dbReference>
<dbReference type="RefSeq" id="WP_002209194.1">
    <property type="nucleotide sequence ID" value="NZ_ACNQ01000006.1"/>
</dbReference>
<dbReference type="SMR" id="Q1CN11"/>
<dbReference type="GeneID" id="57974195"/>
<dbReference type="KEGG" id="ypn:YPN_0286"/>
<dbReference type="HOGENOM" id="CLU_009281_3_4_6"/>
<dbReference type="Proteomes" id="UP000008936">
    <property type="component" value="Chromosome"/>
</dbReference>
<dbReference type="GO" id="GO:0005737">
    <property type="term" value="C:cytoplasm"/>
    <property type="evidence" value="ECO:0007669"/>
    <property type="project" value="UniProtKB-SubCell"/>
</dbReference>
<dbReference type="GO" id="GO:0071518">
    <property type="term" value="F:autoinducer-2 kinase activity"/>
    <property type="evidence" value="ECO:0007669"/>
    <property type="project" value="UniProtKB-UniRule"/>
</dbReference>
<dbReference type="GO" id="GO:0005975">
    <property type="term" value="P:carbohydrate metabolic process"/>
    <property type="evidence" value="ECO:0007669"/>
    <property type="project" value="InterPro"/>
</dbReference>
<dbReference type="GO" id="GO:0009372">
    <property type="term" value="P:quorum sensing"/>
    <property type="evidence" value="ECO:0007669"/>
    <property type="project" value="InterPro"/>
</dbReference>
<dbReference type="CDD" id="cd07775">
    <property type="entry name" value="ASKHA_NBD_FGGY_AI-2K"/>
    <property type="match status" value="1"/>
</dbReference>
<dbReference type="Gene3D" id="3.30.420.40">
    <property type="match status" value="2"/>
</dbReference>
<dbReference type="HAMAP" id="MF_02053">
    <property type="entry name" value="LsrK"/>
    <property type="match status" value="1"/>
</dbReference>
<dbReference type="InterPro" id="IPR033676">
    <property type="entry name" value="AI-2_kinase"/>
</dbReference>
<dbReference type="InterPro" id="IPR043129">
    <property type="entry name" value="ATPase_NBD"/>
</dbReference>
<dbReference type="InterPro" id="IPR000577">
    <property type="entry name" value="Carb_kinase_FGGY"/>
</dbReference>
<dbReference type="InterPro" id="IPR018485">
    <property type="entry name" value="FGGY_C"/>
</dbReference>
<dbReference type="InterPro" id="IPR050406">
    <property type="entry name" value="FGGY_Carb_Kinase"/>
</dbReference>
<dbReference type="InterPro" id="IPR018484">
    <property type="entry name" value="FGGY_N"/>
</dbReference>
<dbReference type="NCBIfam" id="NF008187">
    <property type="entry name" value="PRK10939.1"/>
    <property type="match status" value="1"/>
</dbReference>
<dbReference type="PANTHER" id="PTHR43095:SF1">
    <property type="entry name" value="AUTOINDUCER-2 KINASE"/>
    <property type="match status" value="1"/>
</dbReference>
<dbReference type="PANTHER" id="PTHR43095">
    <property type="entry name" value="SUGAR KINASE"/>
    <property type="match status" value="1"/>
</dbReference>
<dbReference type="Pfam" id="PF02782">
    <property type="entry name" value="FGGY_C"/>
    <property type="match status" value="1"/>
</dbReference>
<dbReference type="Pfam" id="PF00370">
    <property type="entry name" value="FGGY_N"/>
    <property type="match status" value="1"/>
</dbReference>
<dbReference type="PIRSF" id="PIRSF000538">
    <property type="entry name" value="GlpK"/>
    <property type="match status" value="1"/>
</dbReference>
<dbReference type="SUPFAM" id="SSF53067">
    <property type="entry name" value="Actin-like ATPase domain"/>
    <property type="match status" value="2"/>
</dbReference>
<keyword id="KW-0963">Cytoplasm</keyword>
<keyword id="KW-0418">Kinase</keyword>
<keyword id="KW-0808">Transferase</keyword>
<feature type="chain" id="PRO_0000351605" description="Autoinducer-2 kinase">
    <location>
        <begin position="1"/>
        <end position="530"/>
    </location>
</feature>
<gene>
    <name evidence="1" type="primary">lsrK</name>
    <name type="ordered locus">YPN_0286</name>
    <name type="ORF">YP516_0284</name>
</gene>
<reference key="1">
    <citation type="journal article" date="2006" name="J. Bacteriol.">
        <title>Complete genome sequence of Yersinia pestis strains Antiqua and Nepal516: evidence of gene reduction in an emerging pathogen.</title>
        <authorList>
            <person name="Chain P.S.G."/>
            <person name="Hu P."/>
            <person name="Malfatti S.A."/>
            <person name="Radnedge L."/>
            <person name="Larimer F."/>
            <person name="Vergez L.M."/>
            <person name="Worsham P."/>
            <person name="Chu M.C."/>
            <person name="Andersen G.L."/>
        </authorList>
    </citation>
    <scope>NUCLEOTIDE SEQUENCE [LARGE SCALE GENOMIC DNA]</scope>
    <source>
        <strain>Nepal516</strain>
    </source>
</reference>
<reference key="2">
    <citation type="submission" date="2009-04" db="EMBL/GenBank/DDBJ databases">
        <title>Yersinia pestis Nepal516A whole genome shotgun sequencing project.</title>
        <authorList>
            <person name="Plunkett G. III"/>
            <person name="Anderson B.D."/>
            <person name="Baumler D.J."/>
            <person name="Burland V."/>
            <person name="Cabot E.L."/>
            <person name="Glasner J.D."/>
            <person name="Mau B."/>
            <person name="Neeno-Eckwall E."/>
            <person name="Perna N.T."/>
            <person name="Munk A.C."/>
            <person name="Tapia R."/>
            <person name="Green L.D."/>
            <person name="Rogers Y.C."/>
            <person name="Detter J.C."/>
            <person name="Bruce D.C."/>
            <person name="Brettin T.S."/>
        </authorList>
    </citation>
    <scope>NUCLEOTIDE SEQUENCE [LARGE SCALE GENOMIC DNA]</scope>
    <source>
        <strain>Nepal516</strain>
    </source>
</reference>
<evidence type="ECO:0000255" key="1">
    <source>
        <dbReference type="HAMAP-Rule" id="MF_02053"/>
    </source>
</evidence>
<protein>
    <recommendedName>
        <fullName evidence="1">Autoinducer-2 kinase</fullName>
        <shortName evidence="1">AI-2 kinase</shortName>
        <ecNumber evidence="1">2.7.1.189</ecNumber>
    </recommendedName>
</protein>
<accession>Q1CN11</accession>
<accession>C4GNI4</accession>